<reference key="1">
    <citation type="journal article" date="1995" name="Yeast">
        <title>A 37.5 kb region of yeast chromosome X includes the SME1, MEF2, GSH1 and CSD3 genes, a TCP-1-related gene, an open reading frame similar to the DAL80 gene, and a tRNA(Arg).</title>
        <authorList>
            <person name="Rasmussen S.W."/>
        </authorList>
    </citation>
    <scope>NUCLEOTIDE SEQUENCE [GENOMIC DNA]</scope>
    <source>
        <strain>ATCC 96604 / S288c / FY1679</strain>
    </source>
</reference>
<reference key="2">
    <citation type="journal article" date="1996" name="Yeast">
        <title>Sequencing analysis of a 40.2 kb fragment of yeast chromosome X reveals 19 open reading frames including URA2 (5' end), TRK1, PBS2, SPT10, GCD14, RPE1, PHO86, NCA3, ASF1, CCT7, GZF3, two tRNA genes, three remnant delta elements and a Ty4 transposon.</title>
        <authorList>
            <person name="Cziepluch C."/>
            <person name="Kordes E."/>
            <person name="Pujol A."/>
            <person name="Jauniaux J.-C."/>
        </authorList>
    </citation>
    <scope>NUCLEOTIDE SEQUENCE [GENOMIC DNA]</scope>
    <source>
        <strain>ATCC 96604 / S288c / FY1679</strain>
    </source>
</reference>
<reference key="3">
    <citation type="journal article" date="1996" name="EMBO J.">
        <title>Complete nucleotide sequence of Saccharomyces cerevisiae chromosome X.</title>
        <authorList>
            <person name="Galibert F."/>
            <person name="Alexandraki D."/>
            <person name="Baur A."/>
            <person name="Boles E."/>
            <person name="Chalwatzis N."/>
            <person name="Chuat J.-C."/>
            <person name="Coster F."/>
            <person name="Cziepluch C."/>
            <person name="de Haan M."/>
            <person name="Domdey H."/>
            <person name="Durand P."/>
            <person name="Entian K.-D."/>
            <person name="Gatius M."/>
            <person name="Goffeau A."/>
            <person name="Grivell L.A."/>
            <person name="Hennemann A."/>
            <person name="Herbert C.J."/>
            <person name="Heumann K."/>
            <person name="Hilger F."/>
            <person name="Hollenberg C.P."/>
            <person name="Huang M.-E."/>
            <person name="Jacq C."/>
            <person name="Jauniaux J.-C."/>
            <person name="Katsoulou C."/>
            <person name="Kirchrath L."/>
            <person name="Kleine K."/>
            <person name="Kordes E."/>
            <person name="Koetter P."/>
            <person name="Liebl S."/>
            <person name="Louis E.J."/>
            <person name="Manus V."/>
            <person name="Mewes H.-W."/>
            <person name="Miosga T."/>
            <person name="Obermaier B."/>
            <person name="Perea J."/>
            <person name="Pohl T.M."/>
            <person name="Portetelle D."/>
            <person name="Pujol A."/>
            <person name="Purnelle B."/>
            <person name="Ramezani Rad M."/>
            <person name="Rasmussen S.W."/>
            <person name="Rose M."/>
            <person name="Rossau R."/>
            <person name="Schaaff-Gerstenschlaeger I."/>
            <person name="Smits P.H.M."/>
            <person name="Scarcez T."/>
            <person name="Soriano N."/>
            <person name="To Van D."/>
            <person name="Tzermia M."/>
            <person name="Van Broekhoven A."/>
            <person name="Vandenbol M."/>
            <person name="Wedler H."/>
            <person name="von Wettstein D."/>
            <person name="Wambutt R."/>
            <person name="Zagulski M."/>
            <person name="Zollner A."/>
            <person name="Karpfinger-Hartl L."/>
        </authorList>
    </citation>
    <scope>NUCLEOTIDE SEQUENCE [LARGE SCALE GENOMIC DNA]</scope>
    <source>
        <strain>ATCC 204508 / S288c</strain>
    </source>
</reference>
<reference key="4">
    <citation type="journal article" date="2014" name="G3 (Bethesda)">
        <title>The reference genome sequence of Saccharomyces cerevisiae: Then and now.</title>
        <authorList>
            <person name="Engel S.R."/>
            <person name="Dietrich F.S."/>
            <person name="Fisk D.G."/>
            <person name="Binkley G."/>
            <person name="Balakrishnan R."/>
            <person name="Costanzo M.C."/>
            <person name="Dwight S.S."/>
            <person name="Hitz B.C."/>
            <person name="Karra K."/>
            <person name="Nash R.S."/>
            <person name="Weng S."/>
            <person name="Wong E.D."/>
            <person name="Lloyd P."/>
            <person name="Skrzypek M.S."/>
            <person name="Miyasato S.R."/>
            <person name="Simison M."/>
            <person name="Cherry J.M."/>
        </authorList>
    </citation>
    <scope>GENOME REANNOTATION</scope>
    <source>
        <strain>ATCC 204508 / S288c</strain>
    </source>
</reference>
<protein>
    <recommendedName>
        <fullName>T-complex protein 1 subunit eta</fullName>
        <shortName>TCP-1-eta</shortName>
    </recommendedName>
    <alternativeName>
        <fullName>CCT-eta</fullName>
    </alternativeName>
</protein>
<accession>P42943</accession>
<accession>D6VW73</accession>
<proteinExistence type="evidence at protein level"/>
<name>TCPH_YEAST</name>
<sequence length="550" mass="59736">MNFGSQTPTIVVLKEGTDASQGKGQIISNINACVAVQEALKPTLGPLGSDILIVTSNQKTTISNDGATILKLLDVVHPAAKTLVDISRAQDAEVGDGTTSVTILAGELMKEAKPFLEEGISSHLIMKGYRKAVSLAVEKINELAVDITSEKSSGRELLERCARTAMSSKLIHNNADFFVKMCVDAVLSLDRNDLDDKLIGIKKIPGGAMEESLFINGVAFKKTFSYAGFEQQPKKFNNPKILSLNVELELKAEKDNAEVRVEHVEDYQAIVDAEWQLIFEKLRQVEETGANIVLSKLPIGDLATQFFADRNIFCAGRVSADDMNRVIQAVGGSIQSTTSDIKPEHLGTCALFEEMQIGSERYNLFQGCPQAKTCTLLLRGGAEQVIAEVERSLHDAIMIVKRALQNKLIVAGGGATEMEVSKCLRDYSKTIAGKQQMIINAFAKALEVIPRQLCENAGFDAIEILNKLRLAHSKGEKWYGVVFETENIGDNFAKFVWEPALVKINALNSATEATNLILSVDETITNKGSESANAGMMPPQGAGRGRGMPM</sequence>
<gene>
    <name type="primary">CCT7</name>
    <name type="ordered locus">YJL111W</name>
    <name type="ORF">J0804</name>
</gene>
<comment type="function">
    <text evidence="1">Molecular chaperone; assists the folding of proteins upon ATP hydrolysis. Known to play a role, in vitro, in the folding of actin and tubulin. In yeast may play a role in mitotic spindle formation (By similarity).</text>
</comment>
<comment type="subunit">
    <text evidence="1">Heterooligomeric complex of about 850 to 900 kDa that forms two stacked rings, 12 to 16 nm in diameter.</text>
</comment>
<comment type="subcellular location">
    <subcellularLocation>
        <location evidence="1">Cytoplasm</location>
    </subcellularLocation>
</comment>
<comment type="similarity">
    <text evidence="3">Belongs to the TCP-1 chaperonin family.</text>
</comment>
<feature type="chain" id="PRO_0000128372" description="T-complex protein 1 subunit eta">
    <location>
        <begin position="1"/>
        <end position="550"/>
    </location>
</feature>
<feature type="region of interest" description="Disordered" evidence="2">
    <location>
        <begin position="529"/>
        <end position="550"/>
    </location>
</feature>
<feature type="strand" evidence="4">
    <location>
        <begin position="3"/>
        <end position="5"/>
    </location>
</feature>
<feature type="strand" evidence="4">
    <location>
        <begin position="18"/>
        <end position="22"/>
    </location>
</feature>
<feature type="helix" evidence="4">
    <location>
        <begin position="23"/>
        <end position="40"/>
    </location>
</feature>
<feature type="turn" evidence="4">
    <location>
        <begin position="41"/>
        <end position="43"/>
    </location>
</feature>
<feature type="strand" evidence="4">
    <location>
        <begin position="50"/>
        <end position="54"/>
    </location>
</feature>
<feature type="strand" evidence="4">
    <location>
        <begin position="60"/>
        <end position="65"/>
    </location>
</feature>
<feature type="helix" evidence="4">
    <location>
        <begin position="66"/>
        <end position="72"/>
    </location>
</feature>
<feature type="helix" evidence="4">
    <location>
        <begin position="78"/>
        <end position="93"/>
    </location>
</feature>
<feature type="helix" evidence="4">
    <location>
        <begin position="98"/>
        <end position="111"/>
    </location>
</feature>
<feature type="helix" evidence="4">
    <location>
        <begin position="113"/>
        <end position="117"/>
    </location>
</feature>
<feature type="helix" evidence="4">
    <location>
        <begin position="122"/>
        <end position="142"/>
    </location>
</feature>
<feature type="helix" evidence="4">
    <location>
        <begin position="147"/>
        <end position="149"/>
    </location>
</feature>
<feature type="helix" evidence="4">
    <location>
        <begin position="154"/>
        <end position="165"/>
    </location>
</feature>
<feature type="turn" evidence="4">
    <location>
        <begin position="166"/>
        <end position="168"/>
    </location>
</feature>
<feature type="helix" evidence="4">
    <location>
        <begin position="171"/>
        <end position="188"/>
    </location>
</feature>
<feature type="turn" evidence="5">
    <location>
        <begin position="191"/>
        <end position="193"/>
    </location>
</feature>
<feature type="helix" evidence="5">
    <location>
        <begin position="197"/>
        <end position="199"/>
    </location>
</feature>
<feature type="strand" evidence="4">
    <location>
        <begin position="201"/>
        <end position="203"/>
    </location>
</feature>
<feature type="helix" evidence="4">
    <location>
        <begin position="209"/>
        <end position="211"/>
    </location>
</feature>
<feature type="strand" evidence="4">
    <location>
        <begin position="213"/>
        <end position="217"/>
    </location>
</feature>
<feature type="strand" evidence="5">
    <location>
        <begin position="219"/>
        <end position="221"/>
    </location>
</feature>
<feature type="turn" evidence="4">
    <location>
        <begin position="227"/>
        <end position="231"/>
    </location>
</feature>
<feature type="strand" evidence="4">
    <location>
        <begin position="234"/>
        <end position="238"/>
    </location>
</feature>
<feature type="strand" evidence="4">
    <location>
        <begin position="241"/>
        <end position="244"/>
    </location>
</feature>
<feature type="strand" evidence="4">
    <location>
        <begin position="250"/>
        <end position="254"/>
    </location>
</feature>
<feature type="strand" evidence="4">
    <location>
        <begin position="259"/>
        <end position="261"/>
    </location>
</feature>
<feature type="helix" evidence="4">
    <location>
        <begin position="265"/>
        <end position="288"/>
    </location>
</feature>
<feature type="strand" evidence="4">
    <location>
        <begin position="291"/>
        <end position="297"/>
    </location>
</feature>
<feature type="helix" evidence="4">
    <location>
        <begin position="301"/>
        <end position="309"/>
    </location>
</feature>
<feature type="strand" evidence="4">
    <location>
        <begin position="313"/>
        <end position="315"/>
    </location>
</feature>
<feature type="helix" evidence="4">
    <location>
        <begin position="320"/>
        <end position="329"/>
    </location>
</feature>
<feature type="strand" evidence="5">
    <location>
        <begin position="334"/>
        <end position="336"/>
    </location>
</feature>
<feature type="helix" evidence="4">
    <location>
        <begin position="343"/>
        <end position="345"/>
    </location>
</feature>
<feature type="strand" evidence="4">
    <location>
        <begin position="350"/>
        <end position="357"/>
    </location>
</feature>
<feature type="strand" evidence="4">
    <location>
        <begin position="360"/>
        <end position="366"/>
    </location>
</feature>
<feature type="strand" evidence="4">
    <location>
        <begin position="375"/>
        <end position="378"/>
    </location>
</feature>
<feature type="strand" evidence="4">
    <location>
        <begin position="380"/>
        <end position="382"/>
    </location>
</feature>
<feature type="helix" evidence="4">
    <location>
        <begin position="383"/>
        <end position="405"/>
    </location>
</feature>
<feature type="turn" evidence="5">
    <location>
        <begin position="412"/>
        <end position="414"/>
    </location>
</feature>
<feature type="helix" evidence="4">
    <location>
        <begin position="415"/>
        <end position="428"/>
    </location>
</feature>
<feature type="turn" evidence="4">
    <location>
        <begin position="429"/>
        <end position="431"/>
    </location>
</feature>
<feature type="helix" evidence="4">
    <location>
        <begin position="434"/>
        <end position="445"/>
    </location>
</feature>
<feature type="helix" evidence="4">
    <location>
        <begin position="448"/>
        <end position="457"/>
    </location>
</feature>
<feature type="helix" evidence="4">
    <location>
        <begin position="461"/>
        <end position="471"/>
    </location>
</feature>
<feature type="strand" evidence="4">
    <location>
        <begin position="477"/>
        <end position="480"/>
    </location>
</feature>
<feature type="strand" evidence="4">
    <location>
        <begin position="483"/>
        <end position="487"/>
    </location>
</feature>
<feature type="strand" evidence="4">
    <location>
        <begin position="489"/>
        <end position="491"/>
    </location>
</feature>
<feature type="turn" evidence="4">
    <location>
        <begin position="492"/>
        <end position="495"/>
    </location>
</feature>
<feature type="helix" evidence="4">
    <location>
        <begin position="500"/>
        <end position="518"/>
    </location>
</feature>
<feature type="strand" evidence="4">
    <location>
        <begin position="520"/>
        <end position="525"/>
    </location>
</feature>
<keyword id="KW-0002">3D-structure</keyword>
<keyword id="KW-0067">ATP-binding</keyword>
<keyword id="KW-0143">Chaperone</keyword>
<keyword id="KW-0963">Cytoplasm</keyword>
<keyword id="KW-0547">Nucleotide-binding</keyword>
<keyword id="KW-1185">Reference proteome</keyword>
<dbReference type="EMBL" id="X85021">
    <property type="protein sequence ID" value="CAA59383.1"/>
    <property type="molecule type" value="Genomic_DNA"/>
</dbReference>
<dbReference type="EMBL" id="Z49386">
    <property type="protein sequence ID" value="CAA89406.1"/>
    <property type="molecule type" value="Genomic_DNA"/>
</dbReference>
<dbReference type="EMBL" id="BK006943">
    <property type="protein sequence ID" value="DAA08689.1"/>
    <property type="molecule type" value="Genomic_DNA"/>
</dbReference>
<dbReference type="PIR" id="S53376">
    <property type="entry name" value="S53376"/>
</dbReference>
<dbReference type="RefSeq" id="NP_012424.1">
    <property type="nucleotide sequence ID" value="NM_001181544.1"/>
</dbReference>
<dbReference type="PDB" id="4V81">
    <property type="method" value="X-ray"/>
    <property type="resolution" value="3.80 A"/>
    <property type="chains" value="G/O/g/o=1-550"/>
</dbReference>
<dbReference type="PDB" id="4V8R">
    <property type="method" value="X-ray"/>
    <property type="resolution" value="3.80 A"/>
    <property type="chains" value="AH/Ah/BH/Bh=1-550"/>
</dbReference>
<dbReference type="PDB" id="4V94">
    <property type="method" value="X-ray"/>
    <property type="resolution" value="3.80 A"/>
    <property type="chains" value="G/O/g/o=1-550"/>
</dbReference>
<dbReference type="PDB" id="5GW4">
    <property type="method" value="EM"/>
    <property type="resolution" value="4.70 A"/>
    <property type="chains" value="H/h=1-550"/>
</dbReference>
<dbReference type="PDB" id="5GW5">
    <property type="method" value="EM"/>
    <property type="resolution" value="4.60 A"/>
    <property type="chains" value="H/h=1-550"/>
</dbReference>
<dbReference type="PDB" id="6KRD">
    <property type="method" value="EM"/>
    <property type="resolution" value="4.38 A"/>
    <property type="chains" value="H/h=1-550"/>
</dbReference>
<dbReference type="PDB" id="6KRE">
    <property type="method" value="EM"/>
    <property type="resolution" value="4.45 A"/>
    <property type="chains" value="H/h=1-550"/>
</dbReference>
<dbReference type="PDB" id="6KS6">
    <property type="method" value="EM"/>
    <property type="resolution" value="2.99 A"/>
    <property type="chains" value="H/h=1-550"/>
</dbReference>
<dbReference type="PDB" id="6KS7">
    <property type="method" value="EM"/>
    <property type="resolution" value="4.62 A"/>
    <property type="chains" value="H/h=1-550"/>
</dbReference>
<dbReference type="PDB" id="6KS8">
    <property type="method" value="EM"/>
    <property type="resolution" value="4.69 A"/>
    <property type="chains" value="H/h=1-550"/>
</dbReference>
<dbReference type="PDB" id="7YLU">
    <property type="method" value="EM"/>
    <property type="resolution" value="4.55 A"/>
    <property type="chains" value="H/h=1-550"/>
</dbReference>
<dbReference type="PDB" id="7YLV">
    <property type="method" value="EM"/>
    <property type="resolution" value="3.91 A"/>
    <property type="chains" value="H/h=1-550"/>
</dbReference>
<dbReference type="PDB" id="7YLW">
    <property type="method" value="EM"/>
    <property type="resolution" value="3.39 A"/>
    <property type="chains" value="H/h=1-550"/>
</dbReference>
<dbReference type="PDB" id="7YLX">
    <property type="method" value="EM"/>
    <property type="resolution" value="3.20 A"/>
    <property type="chains" value="H/h=1-550"/>
</dbReference>
<dbReference type="PDB" id="7YLY">
    <property type="method" value="EM"/>
    <property type="resolution" value="3.05 A"/>
    <property type="chains" value="H/h=1-550"/>
</dbReference>
<dbReference type="PDB" id="9CR2">
    <property type="method" value="EM"/>
    <property type="resolution" value="4.80 A"/>
    <property type="chains" value="H/h=1-550"/>
</dbReference>
<dbReference type="PDB" id="9CS3">
    <property type="method" value="EM"/>
    <property type="resolution" value="5.60 A"/>
    <property type="chains" value="H/h=1-550"/>
</dbReference>
<dbReference type="PDB" id="9CS4">
    <property type="method" value="EM"/>
    <property type="resolution" value="6.80 A"/>
    <property type="chains" value="H/h=1-550"/>
</dbReference>
<dbReference type="PDB" id="9CS6">
    <property type="method" value="EM"/>
    <property type="resolution" value="4.10 A"/>
    <property type="chains" value="H/h=1-550"/>
</dbReference>
<dbReference type="PDB" id="9CSA">
    <property type="method" value="EM"/>
    <property type="resolution" value="3.60 A"/>
    <property type="chains" value="H/h=1-550"/>
</dbReference>
<dbReference type="PDBsum" id="4V81"/>
<dbReference type="PDBsum" id="4V8R"/>
<dbReference type="PDBsum" id="4V94"/>
<dbReference type="PDBsum" id="5GW4"/>
<dbReference type="PDBsum" id="5GW5"/>
<dbReference type="PDBsum" id="6KRD"/>
<dbReference type="PDBsum" id="6KRE"/>
<dbReference type="PDBsum" id="6KS6"/>
<dbReference type="PDBsum" id="6KS7"/>
<dbReference type="PDBsum" id="6KS8"/>
<dbReference type="PDBsum" id="7YLU"/>
<dbReference type="PDBsum" id="7YLV"/>
<dbReference type="PDBsum" id="7YLW"/>
<dbReference type="PDBsum" id="7YLX"/>
<dbReference type="PDBsum" id="7YLY"/>
<dbReference type="PDBsum" id="9CR2"/>
<dbReference type="PDBsum" id="9CS3"/>
<dbReference type="PDBsum" id="9CS4"/>
<dbReference type="PDBsum" id="9CS6"/>
<dbReference type="PDBsum" id="9CSA"/>
<dbReference type="EMDB" id="EMD-0756"/>
<dbReference type="EMDB" id="EMD-0757"/>
<dbReference type="EMDB" id="EMD-0758"/>
<dbReference type="EMDB" id="EMD-0759"/>
<dbReference type="EMDB" id="EMD-0760"/>
<dbReference type="EMDB" id="EMD-33917"/>
<dbReference type="EMDB" id="EMD-33918"/>
<dbReference type="EMDB" id="EMD-33919"/>
<dbReference type="EMDB" id="EMD-33920"/>
<dbReference type="EMDB" id="EMD-33921"/>
<dbReference type="EMDB" id="EMD-45830"/>
<dbReference type="EMDB" id="EMD-45886"/>
<dbReference type="EMDB" id="EMD-45887"/>
<dbReference type="EMDB" id="EMD-45888"/>
<dbReference type="EMDB" id="EMD-45889"/>
<dbReference type="EMDB" id="EMD-6902"/>
<dbReference type="EMDB" id="EMD-9540"/>
<dbReference type="EMDB" id="EMD-9541"/>
<dbReference type="SMR" id="P42943"/>
<dbReference type="BioGRID" id="33645">
    <property type="interactions" value="190"/>
</dbReference>
<dbReference type="ComplexPortal" id="CPX-2156">
    <property type="entry name" value="Chaperonin-containing T-complex"/>
</dbReference>
<dbReference type="DIP" id="DIP-6758N"/>
<dbReference type="FunCoup" id="P42943">
    <property type="interactions" value="1744"/>
</dbReference>
<dbReference type="IntAct" id="P42943">
    <property type="interactions" value="63"/>
</dbReference>
<dbReference type="MINT" id="P42943"/>
<dbReference type="STRING" id="4932.YJL111W"/>
<dbReference type="iPTMnet" id="P42943"/>
<dbReference type="PaxDb" id="4932-YJL111W"/>
<dbReference type="PeptideAtlas" id="P42943"/>
<dbReference type="DNASU" id="853333"/>
<dbReference type="EnsemblFungi" id="YJL111W_mRNA">
    <property type="protein sequence ID" value="YJL111W"/>
    <property type="gene ID" value="YJL111W"/>
</dbReference>
<dbReference type="GeneID" id="853333"/>
<dbReference type="KEGG" id="sce:YJL111W"/>
<dbReference type="AGR" id="SGD:S000003647"/>
<dbReference type="SGD" id="S000003647">
    <property type="gene designation" value="CCT7"/>
</dbReference>
<dbReference type="VEuPathDB" id="FungiDB:YJL111W"/>
<dbReference type="eggNOG" id="KOG0361">
    <property type="taxonomic scope" value="Eukaryota"/>
</dbReference>
<dbReference type="GeneTree" id="ENSGT00550000074832"/>
<dbReference type="HOGENOM" id="CLU_008891_7_1_1"/>
<dbReference type="InParanoid" id="P42943"/>
<dbReference type="OMA" id="HRKGNTW"/>
<dbReference type="OrthoDB" id="10248520at2759"/>
<dbReference type="BioCyc" id="YEAST:G3O-31565-MONOMER"/>
<dbReference type="BRENDA" id="3.6.4.B10">
    <property type="organism ID" value="984"/>
</dbReference>
<dbReference type="Reactome" id="R-SCE-390471">
    <property type="pathway name" value="Association of TriC/CCT with target proteins during biosynthesis"/>
</dbReference>
<dbReference type="Reactome" id="R-SCE-6814122">
    <property type="pathway name" value="Cooperation of PDCL (PhLP1) and TRiC/CCT in G-protein beta folding"/>
</dbReference>
<dbReference type="BioGRID-ORCS" id="853333">
    <property type="hits" value="0 hits in 10 CRISPR screens"/>
</dbReference>
<dbReference type="PRO" id="PR:P42943"/>
<dbReference type="Proteomes" id="UP000002311">
    <property type="component" value="Chromosome X"/>
</dbReference>
<dbReference type="RNAct" id="P42943">
    <property type="molecule type" value="protein"/>
</dbReference>
<dbReference type="GO" id="GO:0005832">
    <property type="term" value="C:chaperonin-containing T-complex"/>
    <property type="evidence" value="ECO:0000314"/>
    <property type="project" value="SGD"/>
</dbReference>
<dbReference type="GO" id="GO:0005737">
    <property type="term" value="C:cytoplasm"/>
    <property type="evidence" value="ECO:0007005"/>
    <property type="project" value="SGD"/>
</dbReference>
<dbReference type="GO" id="GO:0005524">
    <property type="term" value="F:ATP binding"/>
    <property type="evidence" value="ECO:0007669"/>
    <property type="project" value="UniProtKB-KW"/>
</dbReference>
<dbReference type="GO" id="GO:0016887">
    <property type="term" value="F:ATP hydrolysis activity"/>
    <property type="evidence" value="ECO:0007669"/>
    <property type="project" value="InterPro"/>
</dbReference>
<dbReference type="GO" id="GO:0140662">
    <property type="term" value="F:ATP-dependent protein folding chaperone"/>
    <property type="evidence" value="ECO:0007669"/>
    <property type="project" value="InterPro"/>
</dbReference>
<dbReference type="GO" id="GO:0051082">
    <property type="term" value="F:unfolded protein binding"/>
    <property type="evidence" value="ECO:0000314"/>
    <property type="project" value="SGD"/>
</dbReference>
<dbReference type="GO" id="GO:0051086">
    <property type="term" value="P:chaperone mediated protein folding independent of cofactor"/>
    <property type="evidence" value="ECO:0000314"/>
    <property type="project" value="ComplexPortal"/>
</dbReference>
<dbReference type="GO" id="GO:0006457">
    <property type="term" value="P:protein folding"/>
    <property type="evidence" value="ECO:0000314"/>
    <property type="project" value="SGD"/>
</dbReference>
<dbReference type="CDD" id="cd03340">
    <property type="entry name" value="TCP1_eta"/>
    <property type="match status" value="1"/>
</dbReference>
<dbReference type="FunFam" id="1.10.560.10:FF:000074">
    <property type="entry name" value="T-complex protein 1 subunit delta, putative"/>
    <property type="match status" value="1"/>
</dbReference>
<dbReference type="FunFam" id="1.10.560.10:FF:000017">
    <property type="entry name" value="T-complex protein 1 subunit eta"/>
    <property type="match status" value="1"/>
</dbReference>
<dbReference type="FunFam" id="3.30.260.10:FF:000022">
    <property type="entry name" value="T-complex protein 1 subunit eta"/>
    <property type="match status" value="1"/>
</dbReference>
<dbReference type="FunFam" id="3.50.7.10:FF:000006">
    <property type="entry name" value="T-complex protein 1 subunit eta"/>
    <property type="match status" value="1"/>
</dbReference>
<dbReference type="Gene3D" id="3.50.7.10">
    <property type="entry name" value="GroEL"/>
    <property type="match status" value="1"/>
</dbReference>
<dbReference type="Gene3D" id="1.10.560.10">
    <property type="entry name" value="GroEL-like equatorial domain"/>
    <property type="match status" value="1"/>
</dbReference>
<dbReference type="Gene3D" id="3.30.260.10">
    <property type="entry name" value="TCP-1-like chaperonin intermediate domain"/>
    <property type="match status" value="1"/>
</dbReference>
<dbReference type="InterPro" id="IPR012720">
    <property type="entry name" value="Chap_CCT_eta"/>
</dbReference>
<dbReference type="InterPro" id="IPR017998">
    <property type="entry name" value="Chaperone_TCP-1"/>
</dbReference>
<dbReference type="InterPro" id="IPR002194">
    <property type="entry name" value="Chaperonin_TCP-1_CS"/>
</dbReference>
<dbReference type="InterPro" id="IPR002423">
    <property type="entry name" value="Cpn60/GroEL/TCP-1"/>
</dbReference>
<dbReference type="InterPro" id="IPR027409">
    <property type="entry name" value="GroEL-like_apical_dom_sf"/>
</dbReference>
<dbReference type="InterPro" id="IPR027413">
    <property type="entry name" value="GROEL-like_equatorial_sf"/>
</dbReference>
<dbReference type="InterPro" id="IPR027410">
    <property type="entry name" value="TCP-1-like_intermed_sf"/>
</dbReference>
<dbReference type="InterPro" id="IPR053374">
    <property type="entry name" value="TCP-1_chaperonin"/>
</dbReference>
<dbReference type="InterPro" id="IPR054827">
    <property type="entry name" value="thermosome_alpha"/>
</dbReference>
<dbReference type="NCBIfam" id="TIGR02345">
    <property type="entry name" value="chap_CCT_eta"/>
    <property type="match status" value="1"/>
</dbReference>
<dbReference type="NCBIfam" id="NF041082">
    <property type="entry name" value="thermosome_alpha"/>
    <property type="match status" value="1"/>
</dbReference>
<dbReference type="NCBIfam" id="NF041083">
    <property type="entry name" value="thermosome_beta"/>
    <property type="match status" value="1"/>
</dbReference>
<dbReference type="PANTHER" id="PTHR11353">
    <property type="entry name" value="CHAPERONIN"/>
    <property type="match status" value="1"/>
</dbReference>
<dbReference type="Pfam" id="PF00118">
    <property type="entry name" value="Cpn60_TCP1"/>
    <property type="match status" value="1"/>
</dbReference>
<dbReference type="PRINTS" id="PR00304">
    <property type="entry name" value="TCOMPLEXTCP1"/>
</dbReference>
<dbReference type="SUPFAM" id="SSF52029">
    <property type="entry name" value="GroEL apical domain-like"/>
    <property type="match status" value="1"/>
</dbReference>
<dbReference type="SUPFAM" id="SSF48592">
    <property type="entry name" value="GroEL equatorial domain-like"/>
    <property type="match status" value="1"/>
</dbReference>
<dbReference type="SUPFAM" id="SSF54849">
    <property type="entry name" value="GroEL-intermediate domain like"/>
    <property type="match status" value="1"/>
</dbReference>
<dbReference type="PROSITE" id="PS00751">
    <property type="entry name" value="TCP1_2"/>
    <property type="match status" value="1"/>
</dbReference>
<dbReference type="PROSITE" id="PS00995">
    <property type="entry name" value="TCP1_3"/>
    <property type="match status" value="1"/>
</dbReference>
<organism>
    <name type="scientific">Saccharomyces cerevisiae (strain ATCC 204508 / S288c)</name>
    <name type="common">Baker's yeast</name>
    <dbReference type="NCBI Taxonomy" id="559292"/>
    <lineage>
        <taxon>Eukaryota</taxon>
        <taxon>Fungi</taxon>
        <taxon>Dikarya</taxon>
        <taxon>Ascomycota</taxon>
        <taxon>Saccharomycotina</taxon>
        <taxon>Saccharomycetes</taxon>
        <taxon>Saccharomycetales</taxon>
        <taxon>Saccharomycetaceae</taxon>
        <taxon>Saccharomyces</taxon>
    </lineage>
</organism>
<evidence type="ECO:0000250" key="1"/>
<evidence type="ECO:0000256" key="2">
    <source>
        <dbReference type="SAM" id="MobiDB-lite"/>
    </source>
</evidence>
<evidence type="ECO:0000305" key="3"/>
<evidence type="ECO:0007829" key="4">
    <source>
        <dbReference type="PDB" id="6KS6"/>
    </source>
</evidence>
<evidence type="ECO:0007829" key="5">
    <source>
        <dbReference type="PDB" id="7YLY"/>
    </source>
</evidence>